<gene>
    <name type="primary">HMGA1</name>
    <name type="synonym">HMGIY</name>
</gene>
<sequence length="107" mass="11676">MSESSSKSSQPLASKQEKDGTEKRGRGRPRKQPPVSPGTALVGSQKEPSEVPTPKRPRGRPKGSKNKGAAKTRKTTTTPGRKPRGRPKKLEKEEEEGISQESSEEEQ</sequence>
<proteinExistence type="inferred from homology"/>
<keyword id="KW-0007">Acetylation</keyword>
<keyword id="KW-0013">ADP-ribosylation</keyword>
<keyword id="KW-0025">Alternative splicing</keyword>
<keyword id="KW-0158">Chromosome</keyword>
<keyword id="KW-0238">DNA-binding</keyword>
<keyword id="KW-1017">Isopeptide bond</keyword>
<keyword id="KW-0488">Methylation</keyword>
<keyword id="KW-0539">Nucleus</keyword>
<keyword id="KW-0597">Phosphoprotein</keyword>
<keyword id="KW-1185">Reference proteome</keyword>
<keyword id="KW-0677">Repeat</keyword>
<keyword id="KW-0804">Transcription</keyword>
<keyword id="KW-0805">Transcription regulation</keyword>
<keyword id="KW-0832">Ubl conjugation</keyword>
<reference key="1">
    <citation type="journal article" date="2004" name="Gene">
        <title>The canine HMGA1.</title>
        <authorList>
            <person name="Murua Escobar H."/>
            <person name="Soller J.T."/>
            <person name="Richter A."/>
            <person name="Meyer B."/>
            <person name="Winkler S."/>
            <person name="Flohr A.M."/>
            <person name="Nolte I."/>
            <person name="Bullerdiek J."/>
        </authorList>
    </citation>
    <scope>NUCLEOTIDE SEQUENCE [MRNA] (ISOFORMS HMG-I AND HMG-Y)</scope>
    <source>
        <strain>Alsatian</strain>
        <strain>Bull terrier</strain>
        <strain>Collie</strain>
        <strain>Dachshund</strain>
        <strain>Doberman pinscher</strain>
        <strain>German shorthaired pointer</strain>
        <strain>Golden retriever</strain>
        <strain>Jack Russel terrier</strain>
        <strain>Munsterland</strain>
        <strain>West Highland terrier</strain>
    </source>
</reference>
<feature type="initiator methionine" description="Removed" evidence="2">
    <location>
        <position position="1"/>
    </location>
</feature>
<feature type="chain" id="PRO_0000206706" description="High mobility group protein HMG-I/HMG-Y">
    <location>
        <begin position="2"/>
        <end position="107"/>
    </location>
</feature>
<feature type="DNA-binding region" description="A.T hook 1">
    <location>
        <begin position="21"/>
        <end position="31"/>
    </location>
</feature>
<feature type="DNA-binding region" description="A.T hook 2">
    <location>
        <begin position="53"/>
        <end position="63"/>
    </location>
</feature>
<feature type="DNA-binding region" description="A.T hook 3">
    <location>
        <begin position="78"/>
        <end position="89"/>
    </location>
</feature>
<feature type="region of interest" description="Disordered" evidence="4">
    <location>
        <begin position="1"/>
        <end position="107"/>
    </location>
</feature>
<feature type="region of interest" description="Interaction with HIPK2" evidence="1">
    <location>
        <begin position="53"/>
        <end position="77"/>
    </location>
</feature>
<feature type="compositionally biased region" description="Basic and acidic residues" evidence="4">
    <location>
        <begin position="15"/>
        <end position="24"/>
    </location>
</feature>
<feature type="compositionally biased region" description="Basic residues" evidence="4">
    <location>
        <begin position="55"/>
        <end position="74"/>
    </location>
</feature>
<feature type="compositionally biased region" description="Acidic residues" evidence="4">
    <location>
        <begin position="93"/>
        <end position="107"/>
    </location>
</feature>
<feature type="modified residue" description="N-acetylserine" evidence="2">
    <location>
        <position position="2"/>
    </location>
</feature>
<feature type="modified residue" description="N6-acetyllysine" evidence="2">
    <location>
        <position position="7"/>
    </location>
</feature>
<feature type="modified residue" description="ADP-ribosylserine" evidence="3">
    <location>
        <position position="8"/>
    </location>
</feature>
<feature type="modified residue" description="ADP-ribosylserine; alternate" evidence="3">
    <location>
        <position position="9"/>
    </location>
</feature>
<feature type="modified residue" description="Phosphoserine; alternate" evidence="3">
    <location>
        <position position="9"/>
    </location>
</feature>
<feature type="modified residue" description="N6-acetyllysine; alternate" evidence="3">
    <location>
        <position position="15"/>
    </location>
</feature>
<feature type="modified residue" description="Asymmetric dimethylarginine; alternate" evidence="3">
    <location>
        <position position="26"/>
    </location>
</feature>
<feature type="modified residue" description="Omega-N-methylarginine; alternate" evidence="3">
    <location>
        <position position="26"/>
    </location>
</feature>
<feature type="modified residue" description="Symmetric dimethylarginine; alternate" evidence="3">
    <location>
        <position position="26"/>
    </location>
</feature>
<feature type="modified residue" description="Phosphoserine; by HIPK2 and CDC2" evidence="3">
    <location>
        <position position="36"/>
    </location>
</feature>
<feature type="modified residue" description="Phosphothreonine" evidence="3">
    <location>
        <position position="39"/>
    </location>
</feature>
<feature type="modified residue" description="Phosphoserine" evidence="3">
    <location>
        <position position="44"/>
    </location>
</feature>
<feature type="modified residue" description="Phosphoserine" evidence="3">
    <location>
        <position position="49"/>
    </location>
</feature>
<feature type="modified residue" description="Phosphothreonine; by HIPK2 and CDC2" evidence="3">
    <location>
        <position position="53"/>
    </location>
</feature>
<feature type="modified residue" description="Asymmetric dimethylarginine; by PRMT6; alternate" evidence="3">
    <location>
        <position position="58"/>
    </location>
</feature>
<feature type="modified residue" description="Omega-N-methylarginine; by PRMT6; alternate" evidence="3">
    <location>
        <position position="58"/>
    </location>
</feature>
<feature type="modified residue" description="Asymmetric dimethylarginine; by PRMT6; alternate" evidence="3">
    <location>
        <position position="60"/>
    </location>
</feature>
<feature type="modified residue" description="Omega-N-methylarginine; by PRMT6; alternate" evidence="3">
    <location>
        <position position="60"/>
    </location>
</feature>
<feature type="modified residue" description="Phosphothreonine; by HIPK2 and CDC2" evidence="3">
    <location>
        <position position="78"/>
    </location>
</feature>
<feature type="modified residue" description="Phosphoserine" evidence="3">
    <location>
        <position position="99"/>
    </location>
</feature>
<feature type="modified residue" description="Phosphoserine" evidence="3">
    <location>
        <position position="102"/>
    </location>
</feature>
<feature type="modified residue" description="Phosphoserine" evidence="3">
    <location>
        <position position="103"/>
    </location>
</feature>
<feature type="cross-link" description="Glycyl lysine isopeptide (Lys-Gly) (interchain with G-Cter in SUMO2); alternate" evidence="3">
    <location>
        <position position="15"/>
    </location>
</feature>
<feature type="splice variant" id="VSP_013473" description="In isoform HMG-Y." evidence="5">
    <location>
        <begin position="35"/>
        <end position="45"/>
    </location>
</feature>
<comment type="function">
    <text evidence="1">HMG-I/Y bind preferentially to the minor groove of A+T rich regions in double-stranded DNA. It is suggested that these proteins could function in nucleosome phasing and in the 3'-end processing of mRNA transcripts. They are also involved in the transcription regulation of genes containing, or in close proximity to A+T-rich regions (By similarity).</text>
</comment>
<comment type="subunit">
    <text evidence="1">Interacts with HIPK2.</text>
</comment>
<comment type="subcellular location">
    <subcellularLocation>
        <location evidence="1">Nucleus</location>
    </subcellularLocation>
    <subcellularLocation>
        <location evidence="1">Chromosome</location>
    </subcellularLocation>
</comment>
<comment type="alternative products">
    <event type="alternative splicing"/>
    <isoform>
        <id>Q6URC2-1</id>
        <name>HMG-I</name>
        <name>HMGA1a</name>
        <sequence type="displayed"/>
    </isoform>
    <isoform>
        <id>Q6URC2-2</id>
        <name>HMG-Y</name>
        <name>HMGA1b</name>
        <sequence type="described" ref="VSP_013473"/>
    </isoform>
</comment>
<comment type="PTM">
    <text evidence="1">Isoforms HMG-I and HMG-Y can be phosphorylated by HIPK2. Phosphorylation may modulate DNA-binding affinity (By similarity).</text>
</comment>
<comment type="PTM">
    <text evidence="1">Methylation at Arg-58 is mutually exclusive with methylation at Arg-60.</text>
</comment>
<comment type="similarity">
    <text evidence="6">Belongs to the HMGA family.</text>
</comment>
<name>HMGA1_CANLF</name>
<evidence type="ECO:0000250" key="1"/>
<evidence type="ECO:0000250" key="2">
    <source>
        <dbReference type="UniProtKB" id="P17095"/>
    </source>
</evidence>
<evidence type="ECO:0000250" key="3">
    <source>
        <dbReference type="UniProtKB" id="P17096"/>
    </source>
</evidence>
<evidence type="ECO:0000256" key="4">
    <source>
        <dbReference type="SAM" id="MobiDB-lite"/>
    </source>
</evidence>
<evidence type="ECO:0000303" key="5">
    <source>
    </source>
</evidence>
<evidence type="ECO:0000305" key="6"/>
<protein>
    <recommendedName>
        <fullName>High mobility group protein HMG-I/HMG-Y</fullName>
        <shortName>HMG-I(Y)</shortName>
    </recommendedName>
    <alternativeName>
        <fullName>High mobility group AT-hook protein 1</fullName>
        <shortName>High mobility group protein A1</shortName>
    </alternativeName>
</protein>
<dbReference type="EMBL" id="AY366390">
    <property type="protein sequence ID" value="AAR21596.1"/>
    <property type="molecule type" value="mRNA"/>
</dbReference>
<dbReference type="EMBL" id="AY366391">
    <property type="protein sequence ID" value="AAR21597.1"/>
    <property type="molecule type" value="mRNA"/>
</dbReference>
<dbReference type="EMBL" id="AY363599">
    <property type="protein sequence ID" value="AAR12011.1"/>
    <property type="molecule type" value="mRNA"/>
</dbReference>
<dbReference type="EMBL" id="AY363600">
    <property type="protein sequence ID" value="AAR12012.1"/>
    <property type="molecule type" value="mRNA"/>
</dbReference>
<dbReference type="EMBL" id="AY363601">
    <property type="protein sequence ID" value="AAR12013.1"/>
    <property type="molecule type" value="mRNA"/>
</dbReference>
<dbReference type="EMBL" id="AY363602">
    <property type="protein sequence ID" value="AAR12014.1"/>
    <property type="molecule type" value="mRNA"/>
</dbReference>
<dbReference type="EMBL" id="AY363603">
    <property type="protein sequence ID" value="AAR12015.1"/>
    <property type="molecule type" value="mRNA"/>
</dbReference>
<dbReference type="EMBL" id="AY363604">
    <property type="protein sequence ID" value="AAR12016.1"/>
    <property type="molecule type" value="mRNA"/>
</dbReference>
<dbReference type="EMBL" id="AY363605">
    <property type="protein sequence ID" value="AAR12017.1"/>
    <property type="molecule type" value="mRNA"/>
</dbReference>
<dbReference type="EMBL" id="AY363606">
    <property type="protein sequence ID" value="AAR12018.1"/>
    <property type="molecule type" value="mRNA"/>
</dbReference>
<dbReference type="EMBL" id="AY363607">
    <property type="protein sequence ID" value="AAR12019.1"/>
    <property type="molecule type" value="mRNA"/>
</dbReference>
<dbReference type="EMBL" id="AY363608">
    <property type="protein sequence ID" value="AAR12020.1"/>
    <property type="molecule type" value="mRNA"/>
</dbReference>
<dbReference type="EMBL" id="AY363609">
    <property type="protein sequence ID" value="AAR12021.1"/>
    <property type="molecule type" value="mRNA"/>
</dbReference>
<dbReference type="EMBL" id="AY363610">
    <property type="protein sequence ID" value="AAR12022.1"/>
    <property type="molecule type" value="mRNA"/>
</dbReference>
<dbReference type="RefSeq" id="NP_001003387.1">
    <molecule id="Q6URC2-1"/>
    <property type="nucleotide sequence ID" value="NM_001003387.1"/>
</dbReference>
<dbReference type="RefSeq" id="XP_038538623.1">
    <molecule id="Q6URC2-2"/>
    <property type="nucleotide sequence ID" value="XM_038682695.1"/>
</dbReference>
<dbReference type="RefSeq" id="XP_038538624.1">
    <molecule id="Q6URC2-2"/>
    <property type="nucleotide sequence ID" value="XM_038682696.1"/>
</dbReference>
<dbReference type="RefSeq" id="XP_038538625.1">
    <molecule id="Q6URC2-1"/>
    <property type="nucleotide sequence ID" value="XM_038682697.1"/>
</dbReference>
<dbReference type="BMRB" id="Q6URC2"/>
<dbReference type="SMR" id="Q6URC2"/>
<dbReference type="FunCoup" id="Q6URC2">
    <property type="interactions" value="52"/>
</dbReference>
<dbReference type="STRING" id="9615.ENSCAFP00000001724"/>
<dbReference type="PaxDb" id="9612-ENSCAFP00000001724"/>
<dbReference type="Ensembl" id="ENSCAFT00030007609.1">
    <molecule id="Q6URC2-1"/>
    <property type="protein sequence ID" value="ENSCAFP00030006668.1"/>
    <property type="gene ID" value="ENSCAFG00030004107.1"/>
</dbReference>
<dbReference type="Ensembl" id="ENSCAFT00040021076.1">
    <molecule id="Q6URC2-1"/>
    <property type="protein sequence ID" value="ENSCAFP00040018299.1"/>
    <property type="gene ID" value="ENSCAFG00040011381.1"/>
</dbReference>
<dbReference type="Ensembl" id="ENSCAFT00845046941.1">
    <molecule id="Q6URC2-2"/>
    <property type="protein sequence ID" value="ENSCAFP00845036824.1"/>
    <property type="gene ID" value="ENSCAFG00845026595.1"/>
</dbReference>
<dbReference type="GeneID" id="442946"/>
<dbReference type="KEGG" id="cfa:442946"/>
<dbReference type="CTD" id="3159"/>
<dbReference type="eggNOG" id="ENOG502S5JW">
    <property type="taxonomic scope" value="Eukaryota"/>
</dbReference>
<dbReference type="GeneTree" id="ENSGT00730000111329"/>
<dbReference type="InParanoid" id="Q6URC2"/>
<dbReference type="Reactome" id="R-CFA-2559584">
    <property type="pathway name" value="Formation of Senescence-Associated Heterochromatin Foci (SAHF)"/>
</dbReference>
<dbReference type="Proteomes" id="UP000002254">
    <property type="component" value="Unplaced"/>
</dbReference>
<dbReference type="Proteomes" id="UP000694429">
    <property type="component" value="Chromosome 12"/>
</dbReference>
<dbReference type="Proteomes" id="UP000694542">
    <property type="component" value="Chromosome 12"/>
</dbReference>
<dbReference type="Proteomes" id="UP000805418">
    <property type="component" value="Chromosome 12"/>
</dbReference>
<dbReference type="GO" id="GO:0005829">
    <property type="term" value="C:cytosol"/>
    <property type="evidence" value="ECO:0007669"/>
    <property type="project" value="Ensembl"/>
</dbReference>
<dbReference type="GO" id="GO:0031965">
    <property type="term" value="C:nuclear membrane"/>
    <property type="evidence" value="ECO:0007669"/>
    <property type="project" value="Ensembl"/>
</dbReference>
<dbReference type="GO" id="GO:0005654">
    <property type="term" value="C:nucleoplasm"/>
    <property type="evidence" value="ECO:0007669"/>
    <property type="project" value="Ensembl"/>
</dbReference>
<dbReference type="GO" id="GO:0005634">
    <property type="term" value="C:nucleus"/>
    <property type="evidence" value="ECO:0000250"/>
    <property type="project" value="UniProtKB"/>
</dbReference>
<dbReference type="GO" id="GO:0035985">
    <property type="term" value="C:senescence-associated heterochromatin focus"/>
    <property type="evidence" value="ECO:0000250"/>
    <property type="project" value="UniProtKB"/>
</dbReference>
<dbReference type="GO" id="GO:0000987">
    <property type="term" value="F:cis-regulatory region sequence-specific DNA binding"/>
    <property type="evidence" value="ECO:0007669"/>
    <property type="project" value="Ensembl"/>
</dbReference>
<dbReference type="GO" id="GO:0019899">
    <property type="term" value="F:enzyme binding"/>
    <property type="evidence" value="ECO:0007669"/>
    <property type="project" value="Ensembl"/>
</dbReference>
<dbReference type="GO" id="GO:0003680">
    <property type="term" value="F:minor groove of adenine-thymine-rich DNA binding"/>
    <property type="evidence" value="ECO:0007669"/>
    <property type="project" value="Ensembl"/>
</dbReference>
<dbReference type="GO" id="GO:0140677">
    <property type="term" value="F:molecular function activator activity"/>
    <property type="evidence" value="ECO:0007669"/>
    <property type="project" value="Ensembl"/>
</dbReference>
<dbReference type="GO" id="GO:0042974">
    <property type="term" value="F:nuclear retinoic acid receptor binding"/>
    <property type="evidence" value="ECO:0000250"/>
    <property type="project" value="UniProtKB"/>
</dbReference>
<dbReference type="GO" id="GO:0046965">
    <property type="term" value="F:nuclear retinoid X receptor binding"/>
    <property type="evidence" value="ECO:0000250"/>
    <property type="project" value="UniProtKB"/>
</dbReference>
<dbReference type="GO" id="GO:0042975">
    <property type="term" value="F:peroxisome proliferator activated receptor binding"/>
    <property type="evidence" value="ECO:0000250"/>
    <property type="project" value="UniProtKB"/>
</dbReference>
<dbReference type="GO" id="GO:0003723">
    <property type="term" value="F:RNA binding"/>
    <property type="evidence" value="ECO:0007669"/>
    <property type="project" value="Ensembl"/>
</dbReference>
<dbReference type="GO" id="GO:0003713">
    <property type="term" value="F:transcription coactivator activity"/>
    <property type="evidence" value="ECO:0000250"/>
    <property type="project" value="UniProtKB"/>
</dbReference>
<dbReference type="GO" id="GO:0003712">
    <property type="term" value="F:transcription coregulator activity"/>
    <property type="evidence" value="ECO:0000318"/>
    <property type="project" value="GO_Central"/>
</dbReference>
<dbReference type="GO" id="GO:0001221">
    <property type="term" value="F:transcription coregulator binding"/>
    <property type="evidence" value="ECO:0000250"/>
    <property type="project" value="UniProtKB"/>
</dbReference>
<dbReference type="GO" id="GO:0008285">
    <property type="term" value="P:negative regulation of cell population proliferation"/>
    <property type="evidence" value="ECO:0000250"/>
    <property type="project" value="UniProtKB"/>
</dbReference>
<dbReference type="GO" id="GO:0045892">
    <property type="term" value="P:negative regulation of DNA-templated transcription"/>
    <property type="evidence" value="ECO:0000250"/>
    <property type="project" value="UniProtKB"/>
</dbReference>
<dbReference type="GO" id="GO:0090402">
    <property type="term" value="P:oncogene-induced cell senescence"/>
    <property type="evidence" value="ECO:0000250"/>
    <property type="project" value="UniProtKB"/>
</dbReference>
<dbReference type="GO" id="GO:0045893">
    <property type="term" value="P:positive regulation of DNA-templated transcription"/>
    <property type="evidence" value="ECO:0000250"/>
    <property type="project" value="UniProtKB"/>
</dbReference>
<dbReference type="GO" id="GO:0006355">
    <property type="term" value="P:regulation of DNA-templated transcription"/>
    <property type="evidence" value="ECO:0000318"/>
    <property type="project" value="GO_Central"/>
</dbReference>
<dbReference type="InterPro" id="IPR017956">
    <property type="entry name" value="AT_hook_DNA-bd_motif"/>
</dbReference>
<dbReference type="InterPro" id="IPR000116">
    <property type="entry name" value="HMGA"/>
</dbReference>
<dbReference type="InterPro" id="IPR000637">
    <property type="entry name" value="HMGI/Y_DNA-bd_CS"/>
</dbReference>
<dbReference type="PANTHER" id="PTHR23341:SF1">
    <property type="entry name" value="HIGH MOBILITY GROUP PROTEIN HMG-I_HMG-Y"/>
    <property type="match status" value="1"/>
</dbReference>
<dbReference type="PANTHER" id="PTHR23341">
    <property type="entry name" value="HIGH MOBILITY GROUP PROTEINS HMG-A AND C"/>
    <property type="match status" value="1"/>
</dbReference>
<dbReference type="PRINTS" id="PR00929">
    <property type="entry name" value="ATHOOK"/>
</dbReference>
<dbReference type="PRINTS" id="PR00930">
    <property type="entry name" value="HIGHMOBLTYIY"/>
</dbReference>
<dbReference type="SMART" id="SM00384">
    <property type="entry name" value="AT_hook"/>
    <property type="match status" value="3"/>
</dbReference>
<dbReference type="PROSITE" id="PS00354">
    <property type="entry name" value="HMGI_Y"/>
    <property type="match status" value="3"/>
</dbReference>
<organism>
    <name type="scientific">Canis lupus familiaris</name>
    <name type="common">Dog</name>
    <name type="synonym">Canis familiaris</name>
    <dbReference type="NCBI Taxonomy" id="9615"/>
    <lineage>
        <taxon>Eukaryota</taxon>
        <taxon>Metazoa</taxon>
        <taxon>Chordata</taxon>
        <taxon>Craniata</taxon>
        <taxon>Vertebrata</taxon>
        <taxon>Euteleostomi</taxon>
        <taxon>Mammalia</taxon>
        <taxon>Eutheria</taxon>
        <taxon>Laurasiatheria</taxon>
        <taxon>Carnivora</taxon>
        <taxon>Caniformia</taxon>
        <taxon>Canidae</taxon>
        <taxon>Canis</taxon>
    </lineage>
</organism>
<accession>Q6URC2</accession>